<comment type="function">
    <text evidence="1">Catalyzes the decarboxylation of orotidine 5'-monophosphate (OMP) to uridine 5'-monophosphate (UMP).</text>
</comment>
<comment type="catalytic activity">
    <reaction evidence="1">
        <text>orotidine 5'-phosphate + H(+) = UMP + CO2</text>
        <dbReference type="Rhea" id="RHEA:11596"/>
        <dbReference type="ChEBI" id="CHEBI:15378"/>
        <dbReference type="ChEBI" id="CHEBI:16526"/>
        <dbReference type="ChEBI" id="CHEBI:57538"/>
        <dbReference type="ChEBI" id="CHEBI:57865"/>
        <dbReference type="EC" id="4.1.1.23"/>
    </reaction>
</comment>
<comment type="pathway">
    <text evidence="1">Pyrimidine metabolism; UMP biosynthesis via de novo pathway; UMP from orotate: step 2/2.</text>
</comment>
<comment type="subunit">
    <text evidence="1">Homodimer.</text>
</comment>
<comment type="similarity">
    <text evidence="1">Belongs to the OMP decarboxylase family. Type 1 subfamily.</text>
</comment>
<evidence type="ECO:0000255" key="1">
    <source>
        <dbReference type="HAMAP-Rule" id="MF_01200"/>
    </source>
</evidence>
<protein>
    <recommendedName>
        <fullName evidence="1">Orotidine 5'-phosphate decarboxylase</fullName>
        <ecNumber evidence="1">4.1.1.23</ecNumber>
    </recommendedName>
    <alternativeName>
        <fullName evidence="1">OMP decarboxylase</fullName>
        <shortName evidence="1">OMPDCase</shortName>
        <shortName evidence="1">OMPdecase</shortName>
    </alternativeName>
</protein>
<gene>
    <name evidence="1" type="primary">pyrF</name>
    <name type="ordered locus">CFF8240_1332</name>
</gene>
<proteinExistence type="inferred from homology"/>
<keyword id="KW-0210">Decarboxylase</keyword>
<keyword id="KW-0456">Lyase</keyword>
<keyword id="KW-0665">Pyrimidine biosynthesis</keyword>
<sequence>MKLCVALDLANSDECLRVARELKGLDVWLKVGLRAYLRDGFKFINELKNVDNFKIFLDLKVHDIPNTMADACEVISQIGADMINIHASAGRVAMNSVMERLSKLNNRPLVLAVSALTSFDEESFSEIYAAHIKESVVKFSKISYECGLDGIVCSVYESLDIKNATSSNFLTLTPGIRPFGESNDDQKRVANLKTAMSNKSDFIVVGRPIYQSKNPREITEKILYNIT</sequence>
<organism>
    <name type="scientific">Campylobacter fetus subsp. fetus (strain 82-40)</name>
    <dbReference type="NCBI Taxonomy" id="360106"/>
    <lineage>
        <taxon>Bacteria</taxon>
        <taxon>Pseudomonadati</taxon>
        <taxon>Campylobacterota</taxon>
        <taxon>Epsilonproteobacteria</taxon>
        <taxon>Campylobacterales</taxon>
        <taxon>Campylobacteraceae</taxon>
        <taxon>Campylobacter</taxon>
    </lineage>
</organism>
<feature type="chain" id="PRO_1000065898" description="Orotidine 5'-phosphate decarboxylase">
    <location>
        <begin position="1"/>
        <end position="227"/>
    </location>
</feature>
<feature type="active site" description="Proton donor" evidence="1">
    <location>
        <position position="60"/>
    </location>
</feature>
<feature type="binding site" evidence="1">
    <location>
        <position position="8"/>
    </location>
    <ligand>
        <name>substrate</name>
    </ligand>
</feature>
<feature type="binding site" evidence="1">
    <location>
        <position position="30"/>
    </location>
    <ligand>
        <name>substrate</name>
    </ligand>
</feature>
<feature type="binding site" evidence="1">
    <location>
        <begin position="58"/>
        <end position="67"/>
    </location>
    <ligand>
        <name>substrate</name>
    </ligand>
</feature>
<feature type="binding site" evidence="1">
    <location>
        <position position="117"/>
    </location>
    <ligand>
        <name>substrate</name>
    </ligand>
</feature>
<feature type="binding site" evidence="1">
    <location>
        <position position="177"/>
    </location>
    <ligand>
        <name>substrate</name>
    </ligand>
</feature>
<feature type="binding site" evidence="1">
    <location>
        <position position="186"/>
    </location>
    <ligand>
        <name>substrate</name>
    </ligand>
</feature>
<feature type="binding site" evidence="1">
    <location>
        <position position="206"/>
    </location>
    <ligand>
        <name>substrate</name>
    </ligand>
</feature>
<feature type="binding site" evidence="1">
    <location>
        <position position="207"/>
    </location>
    <ligand>
        <name>substrate</name>
    </ligand>
</feature>
<dbReference type="EC" id="4.1.1.23" evidence="1"/>
<dbReference type="EMBL" id="CP000487">
    <property type="protein sequence ID" value="ABK81949.1"/>
    <property type="molecule type" value="Genomic_DNA"/>
</dbReference>
<dbReference type="RefSeq" id="WP_002850135.1">
    <property type="nucleotide sequence ID" value="NC_008599.1"/>
</dbReference>
<dbReference type="SMR" id="A0RQJ5"/>
<dbReference type="GeneID" id="61065150"/>
<dbReference type="KEGG" id="cff:CFF8240_1332"/>
<dbReference type="eggNOG" id="COG0284">
    <property type="taxonomic scope" value="Bacteria"/>
</dbReference>
<dbReference type="HOGENOM" id="CLU_067069_1_1_7"/>
<dbReference type="UniPathway" id="UPA00070">
    <property type="reaction ID" value="UER00120"/>
</dbReference>
<dbReference type="Proteomes" id="UP000000760">
    <property type="component" value="Chromosome"/>
</dbReference>
<dbReference type="GO" id="GO:0005829">
    <property type="term" value="C:cytosol"/>
    <property type="evidence" value="ECO:0007669"/>
    <property type="project" value="TreeGrafter"/>
</dbReference>
<dbReference type="GO" id="GO:0004590">
    <property type="term" value="F:orotidine-5'-phosphate decarboxylase activity"/>
    <property type="evidence" value="ECO:0007669"/>
    <property type="project" value="UniProtKB-UniRule"/>
</dbReference>
<dbReference type="GO" id="GO:0006207">
    <property type="term" value="P:'de novo' pyrimidine nucleobase biosynthetic process"/>
    <property type="evidence" value="ECO:0007669"/>
    <property type="project" value="InterPro"/>
</dbReference>
<dbReference type="GO" id="GO:0044205">
    <property type="term" value="P:'de novo' UMP biosynthetic process"/>
    <property type="evidence" value="ECO:0007669"/>
    <property type="project" value="UniProtKB-UniRule"/>
</dbReference>
<dbReference type="CDD" id="cd04725">
    <property type="entry name" value="OMP_decarboxylase_like"/>
    <property type="match status" value="1"/>
</dbReference>
<dbReference type="Gene3D" id="3.20.20.70">
    <property type="entry name" value="Aldolase class I"/>
    <property type="match status" value="1"/>
</dbReference>
<dbReference type="HAMAP" id="MF_01200_B">
    <property type="entry name" value="OMPdecase_type1_B"/>
    <property type="match status" value="1"/>
</dbReference>
<dbReference type="InterPro" id="IPR013785">
    <property type="entry name" value="Aldolase_TIM"/>
</dbReference>
<dbReference type="InterPro" id="IPR014732">
    <property type="entry name" value="OMPdecase"/>
</dbReference>
<dbReference type="InterPro" id="IPR018089">
    <property type="entry name" value="OMPdecase_AS"/>
</dbReference>
<dbReference type="InterPro" id="IPR047596">
    <property type="entry name" value="OMPdecase_bac"/>
</dbReference>
<dbReference type="InterPro" id="IPR001754">
    <property type="entry name" value="OMPdeCOase_dom"/>
</dbReference>
<dbReference type="InterPro" id="IPR011060">
    <property type="entry name" value="RibuloseP-bd_barrel"/>
</dbReference>
<dbReference type="NCBIfam" id="NF001273">
    <property type="entry name" value="PRK00230.1"/>
    <property type="match status" value="1"/>
</dbReference>
<dbReference type="NCBIfam" id="TIGR01740">
    <property type="entry name" value="pyrF"/>
    <property type="match status" value="1"/>
</dbReference>
<dbReference type="PANTHER" id="PTHR32119">
    <property type="entry name" value="OROTIDINE 5'-PHOSPHATE DECARBOXYLASE"/>
    <property type="match status" value="1"/>
</dbReference>
<dbReference type="PANTHER" id="PTHR32119:SF2">
    <property type="entry name" value="OROTIDINE 5'-PHOSPHATE DECARBOXYLASE"/>
    <property type="match status" value="1"/>
</dbReference>
<dbReference type="Pfam" id="PF00215">
    <property type="entry name" value="OMPdecase"/>
    <property type="match status" value="1"/>
</dbReference>
<dbReference type="SMART" id="SM00934">
    <property type="entry name" value="OMPdecase"/>
    <property type="match status" value="1"/>
</dbReference>
<dbReference type="SUPFAM" id="SSF51366">
    <property type="entry name" value="Ribulose-phoshate binding barrel"/>
    <property type="match status" value="1"/>
</dbReference>
<dbReference type="PROSITE" id="PS00156">
    <property type="entry name" value="OMPDECASE"/>
    <property type="match status" value="1"/>
</dbReference>
<reference key="1">
    <citation type="submission" date="2006-11" db="EMBL/GenBank/DDBJ databases">
        <title>Sequence of Campylobacter fetus subsp. fetus 82-40.</title>
        <authorList>
            <person name="Fouts D.E."/>
            <person name="Nelson K.E."/>
        </authorList>
    </citation>
    <scope>NUCLEOTIDE SEQUENCE [LARGE SCALE GENOMIC DNA]</scope>
    <source>
        <strain>82-40</strain>
    </source>
</reference>
<name>PYRF_CAMFF</name>
<accession>A0RQJ5</accession>